<name>PYY_RABIT</name>
<comment type="function">
    <text>This gut peptide inhibits exocrine pancreatic secretion, has a vasoconstrictory action and inhibitis jejunal and colonic mobility.</text>
</comment>
<comment type="subcellular location">
    <subcellularLocation>
        <location>Secreted</location>
    </subcellularLocation>
</comment>
<comment type="PTM">
    <text evidence="1">The peptide YY form is cleaved at Pro-2 by the prolyl endopeptidase FAP (seprase) activity (in vitro) to generate peptide YY(3-36).</text>
</comment>
<comment type="similarity">
    <text evidence="5">Belongs to the NPY family.</text>
</comment>
<dbReference type="BMRB" id="Q9TR93"/>
<dbReference type="SMR" id="Q9TR93"/>
<dbReference type="STRING" id="9986.ENSOCUP00000011243"/>
<dbReference type="PaxDb" id="9986-ENSOCUP00000011243"/>
<dbReference type="eggNOG" id="ENOG502S267">
    <property type="taxonomic scope" value="Eukaryota"/>
</dbReference>
<dbReference type="InParanoid" id="Q9TR93"/>
<dbReference type="Proteomes" id="UP000001811">
    <property type="component" value="Unplaced"/>
</dbReference>
<dbReference type="GO" id="GO:0005615">
    <property type="term" value="C:extracellular space"/>
    <property type="evidence" value="ECO:0007669"/>
    <property type="project" value="TreeGrafter"/>
</dbReference>
<dbReference type="GO" id="GO:0005184">
    <property type="term" value="F:neuropeptide hormone activity"/>
    <property type="evidence" value="ECO:0007669"/>
    <property type="project" value="TreeGrafter"/>
</dbReference>
<dbReference type="GO" id="GO:0031841">
    <property type="term" value="F:neuropeptide Y receptor binding"/>
    <property type="evidence" value="ECO:0007669"/>
    <property type="project" value="TreeGrafter"/>
</dbReference>
<dbReference type="GO" id="GO:0007631">
    <property type="term" value="P:feeding behavior"/>
    <property type="evidence" value="ECO:0007669"/>
    <property type="project" value="TreeGrafter"/>
</dbReference>
<dbReference type="GO" id="GO:0007218">
    <property type="term" value="P:neuropeptide signaling pathway"/>
    <property type="evidence" value="ECO:0007669"/>
    <property type="project" value="TreeGrafter"/>
</dbReference>
<dbReference type="CDD" id="cd00126">
    <property type="entry name" value="PAH"/>
    <property type="match status" value="1"/>
</dbReference>
<dbReference type="Gene3D" id="6.10.250.900">
    <property type="match status" value="1"/>
</dbReference>
<dbReference type="InterPro" id="IPR001955">
    <property type="entry name" value="Pancreatic_hormone-like"/>
</dbReference>
<dbReference type="InterPro" id="IPR020392">
    <property type="entry name" value="Pancreatic_hormone-like_CS"/>
</dbReference>
<dbReference type="PANTHER" id="PTHR10533">
    <property type="entry name" value="NEUROPEPTIDE Y/PANCREATIC HORMONE/PEPTIDE YY"/>
    <property type="match status" value="1"/>
</dbReference>
<dbReference type="PANTHER" id="PTHR10533:SF14">
    <property type="entry name" value="PEPTIDE YY-RELATED"/>
    <property type="match status" value="1"/>
</dbReference>
<dbReference type="Pfam" id="PF00159">
    <property type="entry name" value="Hormone_3"/>
    <property type="match status" value="1"/>
</dbReference>
<dbReference type="PRINTS" id="PR00278">
    <property type="entry name" value="PANCHORMONE"/>
</dbReference>
<dbReference type="SMART" id="SM00309">
    <property type="entry name" value="PAH"/>
    <property type="match status" value="1"/>
</dbReference>
<dbReference type="PROSITE" id="PS00265">
    <property type="entry name" value="PANCREATIC_HORMONE_1"/>
    <property type="match status" value="1"/>
</dbReference>
<dbReference type="PROSITE" id="PS50276">
    <property type="entry name" value="PANCREATIC_HORMONE_2"/>
    <property type="match status" value="1"/>
</dbReference>
<proteinExistence type="evidence at protein level"/>
<evidence type="ECO:0000250" key="1">
    <source>
        <dbReference type="UniProtKB" id="P10082"/>
    </source>
</evidence>
<evidence type="ECO:0000250" key="2">
    <source>
        <dbReference type="UniProtKB" id="P68005"/>
    </source>
</evidence>
<evidence type="ECO:0000269" key="3">
    <source>
    </source>
</evidence>
<evidence type="ECO:0000303" key="4">
    <source>
    </source>
</evidence>
<evidence type="ECO:0000305" key="5"/>
<reference key="1">
    <citation type="journal article" date="1994" name="Peptides">
        <title>Characterization of two forms of peptide YY, PYY(1-36) and PYY(3-36), in the rabbit.</title>
        <authorList>
            <person name="Grandt D."/>
            <person name="Schimiczek M."/>
            <person name="Struk K."/>
            <person name="Shively J."/>
            <person name="Eysselein V.E."/>
            <person name="Goebell H."/>
            <person name="Reeve J.R. Jr."/>
        </authorList>
    </citation>
    <scope>PROTEIN SEQUENCE</scope>
    <scope>AMIDATION AT TYR-36</scope>
    <source>
        <tissue>Intestinal mucosa</tissue>
    </source>
</reference>
<gene>
    <name type="primary">PYY</name>
</gene>
<protein>
    <recommendedName>
        <fullName evidence="4">Peptide YY</fullName>
        <shortName evidence="4">PYY</shortName>
    </recommendedName>
    <alternativeName>
        <fullName evidence="4">PYY-I</fullName>
    </alternativeName>
    <alternativeName>
        <fullName>Peptide tyrosine tyrosine</fullName>
    </alternativeName>
    <component>
        <recommendedName>
            <fullName evidence="4">Peptide YY(3-36)</fullName>
        </recommendedName>
        <alternativeName>
            <fullName evidence="4">PYY-II</fullName>
        </alternativeName>
    </component>
</protein>
<organism>
    <name type="scientific">Oryctolagus cuniculus</name>
    <name type="common">Rabbit</name>
    <dbReference type="NCBI Taxonomy" id="9986"/>
    <lineage>
        <taxon>Eukaryota</taxon>
        <taxon>Metazoa</taxon>
        <taxon>Chordata</taxon>
        <taxon>Craniata</taxon>
        <taxon>Vertebrata</taxon>
        <taxon>Euteleostomi</taxon>
        <taxon>Mammalia</taxon>
        <taxon>Eutheria</taxon>
        <taxon>Euarchontoglires</taxon>
        <taxon>Glires</taxon>
        <taxon>Lagomorpha</taxon>
        <taxon>Leporidae</taxon>
        <taxon>Oryctolagus</taxon>
    </lineage>
</organism>
<feature type="peptide" id="PRO_0000025389" description="Peptide YY">
    <location>
        <begin position="1"/>
        <end position="36"/>
    </location>
</feature>
<feature type="peptide" id="PRO_0000025390" description="Peptide YY(3-36)">
    <location>
        <begin position="3"/>
        <end position="36"/>
    </location>
</feature>
<feature type="site" description="Cleavage; by FAP" evidence="1">
    <location>
        <begin position="2"/>
        <end position="3"/>
    </location>
</feature>
<feature type="modified residue" description="Phosphoserine" evidence="2">
    <location>
        <position position="13"/>
    </location>
</feature>
<feature type="modified residue" description="Tyrosine amide" evidence="3">
    <location>
        <position position="36"/>
    </location>
</feature>
<sequence length="36" mass="4285">YPSKPEAPGEDASPEELNRYYASLRHYLNLVTRQRY</sequence>
<keyword id="KW-0027">Amidation</keyword>
<keyword id="KW-0903">Direct protein sequencing</keyword>
<keyword id="KW-0372">Hormone</keyword>
<keyword id="KW-0597">Phosphoprotein</keyword>
<keyword id="KW-1185">Reference proteome</keyword>
<keyword id="KW-0964">Secreted</keyword>
<accession>Q9TR93</accession>
<accession>Q9TR92</accession>